<organism>
    <name type="scientific">Cyriopagopus hainanus</name>
    <name type="common">Chinese bird spider</name>
    <name type="synonym">Haplopelma hainanum</name>
    <dbReference type="NCBI Taxonomy" id="209901"/>
    <lineage>
        <taxon>Eukaryota</taxon>
        <taxon>Metazoa</taxon>
        <taxon>Ecdysozoa</taxon>
        <taxon>Arthropoda</taxon>
        <taxon>Chelicerata</taxon>
        <taxon>Arachnida</taxon>
        <taxon>Araneae</taxon>
        <taxon>Mygalomorphae</taxon>
        <taxon>Theraphosidae</taxon>
        <taxon>Haplopelma</taxon>
    </lineage>
</organism>
<sequence>MNTVRVTFLLVFVLPVSLGQADKDENRMEMQEKTEQGKSYLDFAENLLLQKLEELEAKLLEEDSEESRNSRQKRCIGEGVPCDENDPRCCSGLVCLKPTLHGIWYKSYYCYKK</sequence>
<protein>
    <recommendedName>
        <fullName>U11-theraphotoxin-Hhn1a</fullName>
        <shortName>U11-TRTX-Hhn1a</shortName>
    </recommendedName>
    <alternativeName>
        <fullName>Hainantoxin-XVI.6</fullName>
        <shortName>HNTX-XVI.6</shortName>
    </alternativeName>
    <alternativeName>
        <fullName>Peptide F4-19.87</fullName>
    </alternativeName>
</protein>
<keyword id="KW-0903">Direct protein sequencing</keyword>
<keyword id="KW-1015">Disulfide bond</keyword>
<keyword id="KW-0872">Ion channel impairing toxin</keyword>
<keyword id="KW-0960">Knottin</keyword>
<keyword id="KW-0964">Secreted</keyword>
<keyword id="KW-0732">Signal</keyword>
<keyword id="KW-0800">Toxin</keyword>
<accession>D2Y258</accession>
<feature type="signal peptide" evidence="2">
    <location>
        <begin position="1"/>
        <end position="21"/>
    </location>
</feature>
<feature type="propeptide" id="PRO_0000400867" evidence="4">
    <location>
        <begin position="22"/>
        <end position="74"/>
    </location>
</feature>
<feature type="peptide" id="PRO_0000400868" description="U11-theraphotoxin-Hhn1a">
    <location>
        <begin position="75"/>
        <end position="113"/>
    </location>
</feature>
<feature type="region of interest" description="Disordered" evidence="3">
    <location>
        <begin position="60"/>
        <end position="83"/>
    </location>
</feature>
<feature type="compositionally biased region" description="Basic and acidic residues" evidence="3">
    <location>
        <begin position="60"/>
        <end position="69"/>
    </location>
</feature>
<feature type="disulfide bond" evidence="1">
    <location>
        <begin position="75"/>
        <end position="90"/>
    </location>
</feature>
<feature type="disulfide bond" evidence="1">
    <location>
        <begin position="82"/>
        <end position="95"/>
    </location>
</feature>
<feature type="disulfide bond" evidence="1">
    <location>
        <begin position="89"/>
        <end position="110"/>
    </location>
</feature>
<name>H16A6_CYRHA</name>
<evidence type="ECO:0000250" key="1"/>
<evidence type="ECO:0000255" key="2"/>
<evidence type="ECO:0000256" key="3">
    <source>
        <dbReference type="SAM" id="MobiDB-lite"/>
    </source>
</evidence>
<evidence type="ECO:0000269" key="4">
    <source>
    </source>
</evidence>
<evidence type="ECO:0000305" key="5"/>
<dbReference type="EMBL" id="GU292935">
    <property type="protein sequence ID" value="ADB56751.1"/>
    <property type="molecule type" value="mRNA"/>
</dbReference>
<dbReference type="ArachnoServer" id="AS001592">
    <property type="toxin name" value="U11-theraphotoxin-Hhn1a"/>
</dbReference>
<dbReference type="GO" id="GO:0005576">
    <property type="term" value="C:extracellular region"/>
    <property type="evidence" value="ECO:0007669"/>
    <property type="project" value="UniProtKB-SubCell"/>
</dbReference>
<dbReference type="GO" id="GO:0019871">
    <property type="term" value="F:sodium channel inhibitor activity"/>
    <property type="evidence" value="ECO:0007669"/>
    <property type="project" value="InterPro"/>
</dbReference>
<dbReference type="GO" id="GO:0090729">
    <property type="term" value="F:toxin activity"/>
    <property type="evidence" value="ECO:0007669"/>
    <property type="project" value="UniProtKB-KW"/>
</dbReference>
<dbReference type="InterPro" id="IPR012627">
    <property type="entry name" value="Toxin_22"/>
</dbReference>
<dbReference type="Pfam" id="PF08092">
    <property type="entry name" value="Toxin_22"/>
    <property type="match status" value="1"/>
</dbReference>
<proteinExistence type="evidence at protein level"/>
<reference key="1">
    <citation type="journal article" date="2010" name="J. Proteome Res.">
        <title>Molecular diversification of peptide toxins from the tarantula Haplopelma hainanum (Ornithoctonus hainana) venom based on transcriptomic, peptidomic, and genomic analyses.</title>
        <authorList>
            <person name="Tang X."/>
            <person name="Zhang Y."/>
            <person name="Hu W."/>
            <person name="Xu D."/>
            <person name="Tao H."/>
            <person name="Yang X."/>
            <person name="Li Y."/>
            <person name="Jiang L."/>
            <person name="Liang S."/>
        </authorList>
    </citation>
    <scope>NUCLEOTIDE SEQUENCE [LARGE SCALE MRNA]</scope>
    <scope>PROTEIN SEQUENCE OF 75-113</scope>
    <scope>IDENTIFICATION BY MASS SPECTROMETRY</scope>
    <source>
        <tissue>Venom</tissue>
        <tissue>Venom gland</tissue>
    </source>
</reference>
<comment type="function">
    <text evidence="1">Probable ion channel inhibitor.</text>
</comment>
<comment type="subcellular location">
    <subcellularLocation>
        <location>Secreted</location>
    </subcellularLocation>
</comment>
<comment type="tissue specificity">
    <text>Expressed by the venom gland.</text>
</comment>
<comment type="domain">
    <text evidence="1">The presence of a 'disulfide through disulfide knot' structurally defines this protein as a knottin.</text>
</comment>
<comment type="similarity">
    <text evidence="5">Belongs to the neurotoxin 14 (magi-1) family. 01 (HNTX-16) subfamily.</text>
</comment>